<sequence>MSDICDANKLKHRFRGYFPVVIDVETAGFNSQTDALLEIAVTLLKMDDEGMLGIDKTLHFHIEPFEGANLEPAALAFNGIDPNNPLRGAVSEKEAFLDIFKAVKKAQKAADCHRCIIVAHNAAFDHGFVSKAIERCDLKRSPFHPFATFDTATLAGLAIGHTVLAKACMMAGIPFDNKEAHSALYDTERTAELFCYIVNRWKQLGGWPLLAAAGAQDAESDTEE</sequence>
<dbReference type="EC" id="3.1.13.-" evidence="1"/>
<dbReference type="EMBL" id="CP000681">
    <property type="protein sequence ID" value="ABP75325.1"/>
    <property type="molecule type" value="Genomic_DNA"/>
</dbReference>
<dbReference type="SMR" id="A4Y5U2"/>
<dbReference type="STRING" id="319224.Sputcn32_1600"/>
<dbReference type="KEGG" id="spc:Sputcn32_1600"/>
<dbReference type="eggNOG" id="COG0847">
    <property type="taxonomic scope" value="Bacteria"/>
</dbReference>
<dbReference type="HOGENOM" id="CLU_082724_0_0_6"/>
<dbReference type="GO" id="GO:0005829">
    <property type="term" value="C:cytosol"/>
    <property type="evidence" value="ECO:0007669"/>
    <property type="project" value="TreeGrafter"/>
</dbReference>
<dbReference type="GO" id="GO:0008408">
    <property type="term" value="F:3'-5' exonuclease activity"/>
    <property type="evidence" value="ECO:0007669"/>
    <property type="project" value="TreeGrafter"/>
</dbReference>
<dbReference type="GO" id="GO:0000287">
    <property type="term" value="F:magnesium ion binding"/>
    <property type="evidence" value="ECO:0007669"/>
    <property type="project" value="UniProtKB-UniRule"/>
</dbReference>
<dbReference type="GO" id="GO:0003676">
    <property type="term" value="F:nucleic acid binding"/>
    <property type="evidence" value="ECO:0007669"/>
    <property type="project" value="InterPro"/>
</dbReference>
<dbReference type="GO" id="GO:0016896">
    <property type="term" value="F:RNA exonuclease activity, producing 5'-phosphomonoesters"/>
    <property type="evidence" value="ECO:0007669"/>
    <property type="project" value="UniProtKB-UniRule"/>
</dbReference>
<dbReference type="GO" id="GO:0045004">
    <property type="term" value="P:DNA replication proofreading"/>
    <property type="evidence" value="ECO:0007669"/>
    <property type="project" value="TreeGrafter"/>
</dbReference>
<dbReference type="GO" id="GO:0008033">
    <property type="term" value="P:tRNA processing"/>
    <property type="evidence" value="ECO:0007669"/>
    <property type="project" value="UniProtKB-KW"/>
</dbReference>
<dbReference type="FunFam" id="3.30.420.10:FF:000009">
    <property type="entry name" value="Ribonuclease T"/>
    <property type="match status" value="1"/>
</dbReference>
<dbReference type="Gene3D" id="3.30.420.10">
    <property type="entry name" value="Ribonuclease H-like superfamily/Ribonuclease H"/>
    <property type="match status" value="1"/>
</dbReference>
<dbReference type="HAMAP" id="MF_00157">
    <property type="entry name" value="RNase_T"/>
    <property type="match status" value="1"/>
</dbReference>
<dbReference type="InterPro" id="IPR013520">
    <property type="entry name" value="Exonuclease_RNaseT/DNA_pol3"/>
</dbReference>
<dbReference type="InterPro" id="IPR005987">
    <property type="entry name" value="RNase_T"/>
</dbReference>
<dbReference type="InterPro" id="IPR012337">
    <property type="entry name" value="RNaseH-like_sf"/>
</dbReference>
<dbReference type="InterPro" id="IPR036397">
    <property type="entry name" value="RNaseH_sf"/>
</dbReference>
<dbReference type="NCBIfam" id="TIGR01298">
    <property type="entry name" value="RNaseT"/>
    <property type="match status" value="1"/>
</dbReference>
<dbReference type="PANTHER" id="PTHR30231">
    <property type="entry name" value="DNA POLYMERASE III SUBUNIT EPSILON"/>
    <property type="match status" value="1"/>
</dbReference>
<dbReference type="PANTHER" id="PTHR30231:SF2">
    <property type="entry name" value="RIBONUCLEASE T"/>
    <property type="match status" value="1"/>
</dbReference>
<dbReference type="Pfam" id="PF00929">
    <property type="entry name" value="RNase_T"/>
    <property type="match status" value="1"/>
</dbReference>
<dbReference type="SMART" id="SM00479">
    <property type="entry name" value="EXOIII"/>
    <property type="match status" value="1"/>
</dbReference>
<dbReference type="SUPFAM" id="SSF53098">
    <property type="entry name" value="Ribonuclease H-like"/>
    <property type="match status" value="1"/>
</dbReference>
<evidence type="ECO:0000255" key="1">
    <source>
        <dbReference type="HAMAP-Rule" id="MF_00157"/>
    </source>
</evidence>
<protein>
    <recommendedName>
        <fullName evidence="1">Ribonuclease T</fullName>
        <ecNumber evidence="1">3.1.13.-</ecNumber>
    </recommendedName>
    <alternativeName>
        <fullName evidence="1">Exoribonuclease T</fullName>
        <shortName evidence="1">RNase T</shortName>
    </alternativeName>
</protein>
<organism>
    <name type="scientific">Shewanella putrefaciens (strain CN-32 / ATCC BAA-453)</name>
    <dbReference type="NCBI Taxonomy" id="319224"/>
    <lineage>
        <taxon>Bacteria</taxon>
        <taxon>Pseudomonadati</taxon>
        <taxon>Pseudomonadota</taxon>
        <taxon>Gammaproteobacteria</taxon>
        <taxon>Alteromonadales</taxon>
        <taxon>Shewanellaceae</taxon>
        <taxon>Shewanella</taxon>
    </lineage>
</organism>
<accession>A4Y5U2</accession>
<feature type="chain" id="PRO_1000011416" description="Ribonuclease T">
    <location>
        <begin position="1"/>
        <end position="224"/>
    </location>
</feature>
<feature type="domain" description="Exonuclease" evidence="1">
    <location>
        <begin position="20"/>
        <end position="194"/>
    </location>
</feature>
<feature type="active site" description="Proton donor/acceptor" evidence="1">
    <location>
        <position position="181"/>
    </location>
</feature>
<feature type="binding site" evidence="1">
    <location>
        <position position="23"/>
    </location>
    <ligand>
        <name>Mg(2+)</name>
        <dbReference type="ChEBI" id="CHEBI:18420"/>
        <label>1</label>
        <note>catalytic</note>
    </ligand>
</feature>
<feature type="binding site" evidence="1">
    <location>
        <position position="23"/>
    </location>
    <ligand>
        <name>Mg(2+)</name>
        <dbReference type="ChEBI" id="CHEBI:18420"/>
        <label>2</label>
        <note>catalytic</note>
    </ligand>
</feature>
<feature type="binding site" evidence="1">
    <location>
        <position position="25"/>
    </location>
    <ligand>
        <name>Mg(2+)</name>
        <dbReference type="ChEBI" id="CHEBI:18420"/>
        <label>2</label>
        <note>catalytic</note>
    </ligand>
</feature>
<feature type="binding site" evidence="1">
    <location>
        <position position="181"/>
    </location>
    <ligand>
        <name>Mg(2+)</name>
        <dbReference type="ChEBI" id="CHEBI:18420"/>
        <label>2</label>
        <note>catalytic</note>
    </ligand>
</feature>
<feature type="binding site" evidence="1">
    <location>
        <position position="186"/>
    </location>
    <ligand>
        <name>Mg(2+)</name>
        <dbReference type="ChEBI" id="CHEBI:18420"/>
        <label>2</label>
        <note>catalytic</note>
    </ligand>
</feature>
<feature type="site" description="Important for substrate binding and specificity" evidence="1">
    <location>
        <position position="29"/>
    </location>
</feature>
<feature type="site" description="Important for substrate binding and specificity" evidence="1">
    <location>
        <position position="77"/>
    </location>
</feature>
<feature type="site" description="Important for substrate binding and specificity" evidence="1">
    <location>
        <position position="124"/>
    </location>
</feature>
<feature type="site" description="Important for substrate binding and specificity" evidence="1">
    <location>
        <position position="146"/>
    </location>
</feature>
<reference key="1">
    <citation type="submission" date="2007-04" db="EMBL/GenBank/DDBJ databases">
        <title>Complete sequence of Shewanella putrefaciens CN-32.</title>
        <authorList>
            <consortium name="US DOE Joint Genome Institute"/>
            <person name="Copeland A."/>
            <person name="Lucas S."/>
            <person name="Lapidus A."/>
            <person name="Barry K."/>
            <person name="Detter J.C."/>
            <person name="Glavina del Rio T."/>
            <person name="Hammon N."/>
            <person name="Israni S."/>
            <person name="Dalin E."/>
            <person name="Tice H."/>
            <person name="Pitluck S."/>
            <person name="Chain P."/>
            <person name="Malfatti S."/>
            <person name="Shin M."/>
            <person name="Vergez L."/>
            <person name="Schmutz J."/>
            <person name="Larimer F."/>
            <person name="Land M."/>
            <person name="Hauser L."/>
            <person name="Kyrpides N."/>
            <person name="Mikhailova N."/>
            <person name="Romine M.F."/>
            <person name="Fredrickson J."/>
            <person name="Tiedje J."/>
            <person name="Richardson P."/>
        </authorList>
    </citation>
    <scope>NUCLEOTIDE SEQUENCE [LARGE SCALE GENOMIC DNA]</scope>
    <source>
        <strain>CN-32 / ATCC BAA-453</strain>
    </source>
</reference>
<keyword id="KW-0269">Exonuclease</keyword>
<keyword id="KW-0378">Hydrolase</keyword>
<keyword id="KW-0460">Magnesium</keyword>
<keyword id="KW-0479">Metal-binding</keyword>
<keyword id="KW-0540">Nuclease</keyword>
<keyword id="KW-0819">tRNA processing</keyword>
<proteinExistence type="inferred from homology"/>
<comment type="function">
    <text evidence="1">Trims short 3' overhangs of a variety of RNA species, leaving a one or two nucleotide 3' overhang. Responsible for the end-turnover of tRNA: specifically removes the terminal AMP residue from uncharged tRNA (tRNA-C-C-A). Also appears to be involved in tRNA biosynthesis.</text>
</comment>
<comment type="cofactor">
    <cofactor evidence="1">
        <name>Mg(2+)</name>
        <dbReference type="ChEBI" id="CHEBI:18420"/>
    </cofactor>
    <text evidence="1">Binds two Mg(2+) per subunit. The active form of the enzyme binds two Mg(2+) ions in its active site. The first Mg(2+) forms only one salt bridge with the protein.</text>
</comment>
<comment type="subunit">
    <text evidence="1">Homodimer.</text>
</comment>
<comment type="similarity">
    <text evidence="1">Belongs to the RNase T family.</text>
</comment>
<name>RNT_SHEPC</name>
<gene>
    <name evidence="1" type="primary">rnt</name>
    <name type="ordered locus">Sputcn32_1600</name>
</gene>